<comment type="function">
    <text evidence="1">Catalyzes the ATP- as well as the pyrophosphate-dependent phosphorylation of a specific serine residue in HPr, a phosphocarrier protein of the phosphoenolpyruvate-dependent sugar phosphotransferase system (PTS). HprK/P also catalyzes the pyrophosphate-producing, inorganic phosphate-dependent dephosphorylation (phosphorolysis) of seryl-phosphorylated HPr (P-Ser-HPr). The two antagonistic activities of HprK/P are regulated by several intracellular metabolites, which change their concentration in response to the absence or presence of rapidly metabolisable carbon sources (glucose, fructose, etc.) in the growth medium. Therefore, by controlling the phosphorylation state of HPr, HPrK/P is a sensor enzyme that plays a major role in the regulation of carbon metabolism and sugar transport: it mediates carbon catabolite repression (CCR), and regulates PTS-catalyzed carbohydrate uptake and inducer exclusion.</text>
</comment>
<comment type="catalytic activity">
    <reaction evidence="1">
        <text>[HPr protein]-L-serine + ATP = [HPr protein]-O-phospho-L-serine + ADP + H(+)</text>
        <dbReference type="Rhea" id="RHEA:46600"/>
        <dbReference type="Rhea" id="RHEA-COMP:11602"/>
        <dbReference type="Rhea" id="RHEA-COMP:11603"/>
        <dbReference type="ChEBI" id="CHEBI:15378"/>
        <dbReference type="ChEBI" id="CHEBI:29999"/>
        <dbReference type="ChEBI" id="CHEBI:30616"/>
        <dbReference type="ChEBI" id="CHEBI:83421"/>
        <dbReference type="ChEBI" id="CHEBI:456216"/>
    </reaction>
</comment>
<comment type="catalytic activity">
    <reaction evidence="1">
        <text>[HPr protein]-O-phospho-L-serine + phosphate + H(+) = [HPr protein]-L-serine + diphosphate</text>
        <dbReference type="Rhea" id="RHEA:46604"/>
        <dbReference type="Rhea" id="RHEA-COMP:11602"/>
        <dbReference type="Rhea" id="RHEA-COMP:11603"/>
        <dbReference type="ChEBI" id="CHEBI:15378"/>
        <dbReference type="ChEBI" id="CHEBI:29999"/>
        <dbReference type="ChEBI" id="CHEBI:33019"/>
        <dbReference type="ChEBI" id="CHEBI:43474"/>
        <dbReference type="ChEBI" id="CHEBI:83421"/>
    </reaction>
</comment>
<comment type="cofactor">
    <cofactor evidence="1">
        <name>Mg(2+)</name>
        <dbReference type="ChEBI" id="CHEBI:18420"/>
    </cofactor>
</comment>
<comment type="subunit">
    <text evidence="1">Homohexamer.</text>
</comment>
<comment type="domain">
    <text evidence="1">The Walker A ATP-binding motif also binds Pi and PPi.</text>
</comment>
<comment type="miscellaneous">
    <text evidence="1">Both phosphorylation and phosphorolysis are carried out by the same active site and suggest a common mechanism for both reactions.</text>
</comment>
<comment type="similarity">
    <text evidence="1">Belongs to the HPrK/P family.</text>
</comment>
<sequence>MLTTEKLVETLKLDLIAGEEGLSKPIKNADISRPGLEMAGYFSHYASDRIQLLGTTELSFYNLLPDKDRAGRMRKLCRPETPAIIVTRGLQPPEELVEAAKELNTPLIVAKDATTSLMSRLTTFLEHALAKTTSLHGVLVDVYGVGVLITGDSGIGKSETALELVKRGHRLVADDNVEIRQINKDELIGKPPKLIEHLLEIRGLGIINVMTLFGAGSILTEKRIRLNINLENWNKQKLYDRVGLNEETLSILDTEITKKTIPVRPGRNVAVIIEVAAMNYRLNIMGINTAEEFSERLNEEIIKNSHKSEE</sequence>
<gene>
    <name evidence="1" type="primary">hprK</name>
    <name type="ordered locus">SaurJH9_0784</name>
</gene>
<organism>
    <name type="scientific">Staphylococcus aureus (strain JH9)</name>
    <dbReference type="NCBI Taxonomy" id="359786"/>
    <lineage>
        <taxon>Bacteria</taxon>
        <taxon>Bacillati</taxon>
        <taxon>Bacillota</taxon>
        <taxon>Bacilli</taxon>
        <taxon>Bacillales</taxon>
        <taxon>Staphylococcaceae</taxon>
        <taxon>Staphylococcus</taxon>
    </lineage>
</organism>
<name>HPRK_STAA9</name>
<keyword id="KW-0067">ATP-binding</keyword>
<keyword id="KW-0119">Carbohydrate metabolism</keyword>
<keyword id="KW-0418">Kinase</keyword>
<keyword id="KW-0460">Magnesium</keyword>
<keyword id="KW-0479">Metal-binding</keyword>
<keyword id="KW-0511">Multifunctional enzyme</keyword>
<keyword id="KW-0547">Nucleotide-binding</keyword>
<keyword id="KW-0723">Serine/threonine-protein kinase</keyword>
<keyword id="KW-0808">Transferase</keyword>
<protein>
    <recommendedName>
        <fullName evidence="1">HPr kinase/phosphorylase</fullName>
        <shortName evidence="1">HPrK/P</shortName>
        <ecNumber evidence="1">2.7.11.-</ecNumber>
        <ecNumber evidence="1">2.7.4.-</ecNumber>
    </recommendedName>
    <alternativeName>
        <fullName evidence="1">HPr(Ser) kinase/phosphorylase</fullName>
    </alternativeName>
</protein>
<dbReference type="EC" id="2.7.11.-" evidence="1"/>
<dbReference type="EC" id="2.7.4.-" evidence="1"/>
<dbReference type="EMBL" id="CP000703">
    <property type="protein sequence ID" value="ABQ48587.1"/>
    <property type="molecule type" value="Genomic_DNA"/>
</dbReference>
<dbReference type="RefSeq" id="WP_000958224.1">
    <property type="nucleotide sequence ID" value="NC_009487.1"/>
</dbReference>
<dbReference type="SMR" id="A5IQW4"/>
<dbReference type="KEGG" id="saj:SaurJH9_0784"/>
<dbReference type="HOGENOM" id="CLU_052030_0_1_9"/>
<dbReference type="GO" id="GO:0005524">
    <property type="term" value="F:ATP binding"/>
    <property type="evidence" value="ECO:0007669"/>
    <property type="project" value="UniProtKB-UniRule"/>
</dbReference>
<dbReference type="GO" id="GO:0000287">
    <property type="term" value="F:magnesium ion binding"/>
    <property type="evidence" value="ECO:0007669"/>
    <property type="project" value="UniProtKB-UniRule"/>
</dbReference>
<dbReference type="GO" id="GO:0000155">
    <property type="term" value="F:phosphorelay sensor kinase activity"/>
    <property type="evidence" value="ECO:0007669"/>
    <property type="project" value="InterPro"/>
</dbReference>
<dbReference type="GO" id="GO:0004674">
    <property type="term" value="F:protein serine/threonine kinase activity"/>
    <property type="evidence" value="ECO:0007669"/>
    <property type="project" value="UniProtKB-KW"/>
</dbReference>
<dbReference type="GO" id="GO:0004712">
    <property type="term" value="F:protein serine/threonine/tyrosine kinase activity"/>
    <property type="evidence" value="ECO:0007669"/>
    <property type="project" value="UniProtKB-UniRule"/>
</dbReference>
<dbReference type="GO" id="GO:0006109">
    <property type="term" value="P:regulation of carbohydrate metabolic process"/>
    <property type="evidence" value="ECO:0007669"/>
    <property type="project" value="UniProtKB-UniRule"/>
</dbReference>
<dbReference type="CDD" id="cd01918">
    <property type="entry name" value="HprK_C"/>
    <property type="match status" value="1"/>
</dbReference>
<dbReference type="FunFam" id="3.40.1390.20:FF:000002">
    <property type="entry name" value="HPr kinase/phosphorylase"/>
    <property type="match status" value="1"/>
</dbReference>
<dbReference type="FunFam" id="3.40.50.300:FF:000174">
    <property type="entry name" value="HPr kinase/phosphorylase"/>
    <property type="match status" value="1"/>
</dbReference>
<dbReference type="Gene3D" id="3.40.1390.20">
    <property type="entry name" value="HprK N-terminal domain-like"/>
    <property type="match status" value="1"/>
</dbReference>
<dbReference type="Gene3D" id="3.40.50.300">
    <property type="entry name" value="P-loop containing nucleotide triphosphate hydrolases"/>
    <property type="match status" value="1"/>
</dbReference>
<dbReference type="HAMAP" id="MF_01249">
    <property type="entry name" value="HPr_kinase"/>
    <property type="match status" value="1"/>
</dbReference>
<dbReference type="InterPro" id="IPR003755">
    <property type="entry name" value="HPr(Ser)_kin/Pase"/>
</dbReference>
<dbReference type="InterPro" id="IPR011104">
    <property type="entry name" value="Hpr_kin/Pase_C"/>
</dbReference>
<dbReference type="InterPro" id="IPR011126">
    <property type="entry name" value="Hpr_kin/Pase_Hpr_N"/>
</dbReference>
<dbReference type="InterPro" id="IPR027417">
    <property type="entry name" value="P-loop_NTPase"/>
</dbReference>
<dbReference type="InterPro" id="IPR028979">
    <property type="entry name" value="Ser_kin/Pase_Hpr-like_N_sf"/>
</dbReference>
<dbReference type="NCBIfam" id="TIGR00679">
    <property type="entry name" value="hpr-ser"/>
    <property type="match status" value="1"/>
</dbReference>
<dbReference type="PANTHER" id="PTHR30305:SF1">
    <property type="entry name" value="HPR KINASE_PHOSPHORYLASE"/>
    <property type="match status" value="1"/>
</dbReference>
<dbReference type="PANTHER" id="PTHR30305">
    <property type="entry name" value="PROTEIN YJDM-RELATED"/>
    <property type="match status" value="1"/>
</dbReference>
<dbReference type="Pfam" id="PF07475">
    <property type="entry name" value="Hpr_kinase_C"/>
    <property type="match status" value="1"/>
</dbReference>
<dbReference type="Pfam" id="PF02603">
    <property type="entry name" value="Hpr_kinase_N"/>
    <property type="match status" value="1"/>
</dbReference>
<dbReference type="SUPFAM" id="SSF75138">
    <property type="entry name" value="HprK N-terminal domain-like"/>
    <property type="match status" value="1"/>
</dbReference>
<dbReference type="SUPFAM" id="SSF53795">
    <property type="entry name" value="PEP carboxykinase-like"/>
    <property type="match status" value="1"/>
</dbReference>
<evidence type="ECO:0000255" key="1">
    <source>
        <dbReference type="HAMAP-Rule" id="MF_01249"/>
    </source>
</evidence>
<proteinExistence type="inferred from homology"/>
<accession>A5IQW4</accession>
<feature type="chain" id="PRO_1000085797" description="HPr kinase/phosphorylase">
    <location>
        <begin position="1"/>
        <end position="310"/>
    </location>
</feature>
<feature type="region of interest" description="Important for the catalytic mechanism of both phosphorylation and dephosphorylation" evidence="1">
    <location>
        <begin position="199"/>
        <end position="208"/>
    </location>
</feature>
<feature type="region of interest" description="Important for the catalytic mechanism of dephosphorylation" evidence="1">
    <location>
        <begin position="262"/>
        <end position="267"/>
    </location>
</feature>
<feature type="active site" evidence="1">
    <location>
        <position position="136"/>
    </location>
</feature>
<feature type="active site" evidence="1">
    <location>
        <position position="157"/>
    </location>
</feature>
<feature type="active site" description="Proton acceptor; for phosphorylation activity. Proton donor; for dephosphorylation activity" evidence="1">
    <location>
        <position position="175"/>
    </location>
</feature>
<feature type="active site" evidence="1">
    <location>
        <position position="241"/>
    </location>
</feature>
<feature type="binding site" evidence="1">
    <location>
        <begin position="151"/>
        <end position="158"/>
    </location>
    <ligand>
        <name>ATP</name>
        <dbReference type="ChEBI" id="CHEBI:30616"/>
    </ligand>
</feature>
<feature type="binding site" evidence="1">
    <location>
        <position position="158"/>
    </location>
    <ligand>
        <name>Mg(2+)</name>
        <dbReference type="ChEBI" id="CHEBI:18420"/>
    </ligand>
</feature>
<feature type="binding site" evidence="1">
    <location>
        <position position="200"/>
    </location>
    <ligand>
        <name>Mg(2+)</name>
        <dbReference type="ChEBI" id="CHEBI:18420"/>
    </ligand>
</feature>
<reference key="1">
    <citation type="submission" date="2007-05" db="EMBL/GenBank/DDBJ databases">
        <title>Complete sequence of chromosome of Staphylococcus aureus subsp. aureus JH9.</title>
        <authorList>
            <consortium name="US DOE Joint Genome Institute"/>
            <person name="Copeland A."/>
            <person name="Lucas S."/>
            <person name="Lapidus A."/>
            <person name="Barry K."/>
            <person name="Detter J.C."/>
            <person name="Glavina del Rio T."/>
            <person name="Hammon N."/>
            <person name="Israni S."/>
            <person name="Pitluck S."/>
            <person name="Chain P."/>
            <person name="Malfatti S."/>
            <person name="Shin M."/>
            <person name="Vergez L."/>
            <person name="Schmutz J."/>
            <person name="Larimer F."/>
            <person name="Land M."/>
            <person name="Hauser L."/>
            <person name="Kyrpides N."/>
            <person name="Kim E."/>
            <person name="Tomasz A."/>
            <person name="Richardson P."/>
        </authorList>
    </citation>
    <scope>NUCLEOTIDE SEQUENCE [LARGE SCALE GENOMIC DNA]</scope>
    <source>
        <strain>JH9</strain>
    </source>
</reference>